<evidence type="ECO:0000255" key="1">
    <source>
        <dbReference type="HAMAP-Rule" id="MF_02102"/>
    </source>
</evidence>
<comment type="function">
    <text evidence="1">Catalyzes the phosphorolysis of N-carbamoylputrescine to form carbamoyl phosphate and putrescine. Is involved in the degradation pathway of the polyamine agmatine.</text>
</comment>
<comment type="catalytic activity">
    <reaction evidence="1">
        <text>carbamoyl phosphate + putrescine = N-carbamoylputrescine + phosphate + H(+)</text>
        <dbReference type="Rhea" id="RHEA:21936"/>
        <dbReference type="ChEBI" id="CHEBI:15378"/>
        <dbReference type="ChEBI" id="CHEBI:43474"/>
        <dbReference type="ChEBI" id="CHEBI:58228"/>
        <dbReference type="ChEBI" id="CHEBI:58318"/>
        <dbReference type="ChEBI" id="CHEBI:326268"/>
        <dbReference type="EC" id="2.1.3.6"/>
    </reaction>
</comment>
<comment type="pathway">
    <text evidence="1">Amine and polyamine biosynthesis; putrescine biosynthesis via agmatine pathway; putrescine from N-carbamoylputrescine (transferase route): step 1/1.</text>
</comment>
<comment type="subunit">
    <text evidence="1">Homotrimer.</text>
</comment>
<comment type="subcellular location">
    <subcellularLocation>
        <location evidence="1">Cytoplasm</location>
    </subcellularLocation>
</comment>
<comment type="similarity">
    <text evidence="1">Belongs to the aspartate/ornithine carbamoyltransferase superfamily. PTCase family.</text>
</comment>
<accession>C1KV77</accession>
<reference key="1">
    <citation type="journal article" date="2012" name="BMC Genomics">
        <title>Comparative genomics and transcriptomics of lineages I, II, and III strains of Listeria monocytogenes.</title>
        <authorList>
            <person name="Hain T."/>
            <person name="Ghai R."/>
            <person name="Billion A."/>
            <person name="Kuenne C.T."/>
            <person name="Steinweg C."/>
            <person name="Izar B."/>
            <person name="Mohamed W."/>
            <person name="Mraheil M."/>
            <person name="Domann E."/>
            <person name="Schaffrath S."/>
            <person name="Karst U."/>
            <person name="Goesmann A."/>
            <person name="Oehm S."/>
            <person name="Puhler A."/>
            <person name="Merkl R."/>
            <person name="Vorwerk S."/>
            <person name="Glaser P."/>
            <person name="Garrido P."/>
            <person name="Rusniok C."/>
            <person name="Buchrieser C."/>
            <person name="Goebel W."/>
            <person name="Chakraborty T."/>
        </authorList>
    </citation>
    <scope>NUCLEOTIDE SEQUENCE [LARGE SCALE GENOMIC DNA]</scope>
    <source>
        <strain>CLIP80459</strain>
    </source>
</reference>
<organism>
    <name type="scientific">Listeria monocytogenes serotype 4b (strain CLIP80459)</name>
    <dbReference type="NCBI Taxonomy" id="568819"/>
    <lineage>
        <taxon>Bacteria</taxon>
        <taxon>Bacillati</taxon>
        <taxon>Bacillota</taxon>
        <taxon>Bacilli</taxon>
        <taxon>Bacillales</taxon>
        <taxon>Listeriaceae</taxon>
        <taxon>Listeria</taxon>
    </lineage>
</organism>
<gene>
    <name evidence="1" type="primary">ptcA</name>
    <name type="ordered locus">Lm4b_00045</name>
</gene>
<feature type="chain" id="PRO_1000216419" description="Putrescine carbamoyltransferase">
    <location>
        <begin position="1"/>
        <end position="341"/>
    </location>
</feature>
<feature type="binding site" evidence="1">
    <location>
        <begin position="54"/>
        <end position="58"/>
    </location>
    <ligand>
        <name>carbamoyl phosphate</name>
        <dbReference type="ChEBI" id="CHEBI:58228"/>
    </ligand>
</feature>
<feature type="binding site" evidence="1">
    <location>
        <position position="105"/>
    </location>
    <ligand>
        <name>carbamoyl phosphate</name>
        <dbReference type="ChEBI" id="CHEBI:58228"/>
    </ligand>
</feature>
<feature type="binding site" evidence="1">
    <location>
        <position position="132"/>
    </location>
    <ligand>
        <name>carbamoyl phosphate</name>
        <dbReference type="ChEBI" id="CHEBI:58228"/>
    </ligand>
</feature>
<feature type="binding site" evidence="1">
    <location>
        <begin position="271"/>
        <end position="274"/>
    </location>
    <ligand>
        <name>putrescine</name>
        <dbReference type="ChEBI" id="CHEBI:326268"/>
    </ligand>
</feature>
<feature type="site" description="Important for structural integrity" evidence="1">
    <location>
        <position position="29"/>
    </location>
</feature>
<feature type="site" description="Important for structural integrity" evidence="1">
    <location>
        <position position="145"/>
    </location>
</feature>
<keyword id="KW-0963">Cytoplasm</keyword>
<keyword id="KW-0620">Polyamine biosynthesis</keyword>
<keyword id="KW-0808">Transferase</keyword>
<protein>
    <recommendedName>
        <fullName evidence="1">Putrescine carbamoyltransferase</fullName>
        <shortName evidence="1">PTC</shortName>
        <shortName evidence="1">PTCase</shortName>
        <ecNumber evidence="1">2.1.3.6</ecNumber>
    </recommendedName>
    <alternativeName>
        <fullName evidence="1">Putrescine transcarbamoylase</fullName>
    </alternativeName>
    <alternativeName>
        <fullName evidence="1">Putrescine transcarbamylase</fullName>
    </alternativeName>
</protein>
<name>PTC_LISMC</name>
<dbReference type="EC" id="2.1.3.6" evidence="1"/>
<dbReference type="EMBL" id="FM242711">
    <property type="protein sequence ID" value="CAS03835.1"/>
    <property type="molecule type" value="Genomic_DNA"/>
</dbReference>
<dbReference type="RefSeq" id="WP_003724872.1">
    <property type="nucleotide sequence ID" value="NC_012488.1"/>
</dbReference>
<dbReference type="SMR" id="C1KV77"/>
<dbReference type="KEGG" id="lmc:Lm4b_00045"/>
<dbReference type="HOGENOM" id="CLU_043846_3_1_9"/>
<dbReference type="UniPathway" id="UPA00534">
    <property type="reaction ID" value="UER00941"/>
</dbReference>
<dbReference type="GO" id="GO:0005737">
    <property type="term" value="C:cytoplasm"/>
    <property type="evidence" value="ECO:0007669"/>
    <property type="project" value="UniProtKB-SubCell"/>
</dbReference>
<dbReference type="GO" id="GO:0016597">
    <property type="term" value="F:amino acid binding"/>
    <property type="evidence" value="ECO:0007669"/>
    <property type="project" value="InterPro"/>
</dbReference>
<dbReference type="GO" id="GO:0004585">
    <property type="term" value="F:ornithine carbamoyltransferase activity"/>
    <property type="evidence" value="ECO:0007669"/>
    <property type="project" value="TreeGrafter"/>
</dbReference>
<dbReference type="GO" id="GO:0050231">
    <property type="term" value="F:putrescine carbamoyltransferase activity"/>
    <property type="evidence" value="ECO:0007669"/>
    <property type="project" value="UniProtKB-UniRule"/>
</dbReference>
<dbReference type="GO" id="GO:0042450">
    <property type="term" value="P:arginine biosynthetic process via ornithine"/>
    <property type="evidence" value="ECO:0007669"/>
    <property type="project" value="TreeGrafter"/>
</dbReference>
<dbReference type="GO" id="GO:0019240">
    <property type="term" value="P:citrulline biosynthetic process"/>
    <property type="evidence" value="ECO:0007669"/>
    <property type="project" value="TreeGrafter"/>
</dbReference>
<dbReference type="GO" id="GO:0033390">
    <property type="term" value="P:putrescine biosynthetic process from arginine via N-carbamoylputrescine"/>
    <property type="evidence" value="ECO:0007669"/>
    <property type="project" value="UniProtKB-UniRule"/>
</dbReference>
<dbReference type="FunFam" id="3.40.50.1370:FF:000008">
    <property type="entry name" value="Ornithine carbamoyltransferase"/>
    <property type="match status" value="1"/>
</dbReference>
<dbReference type="Gene3D" id="3.40.50.1370">
    <property type="entry name" value="Aspartate/ornithine carbamoyltransferase"/>
    <property type="match status" value="2"/>
</dbReference>
<dbReference type="HAMAP" id="MF_02102">
    <property type="entry name" value="PTCase"/>
    <property type="match status" value="1"/>
</dbReference>
<dbReference type="InterPro" id="IPR006132">
    <property type="entry name" value="Asp/Orn_carbamoyltranf_P-bd"/>
</dbReference>
<dbReference type="InterPro" id="IPR006130">
    <property type="entry name" value="Asp/Orn_carbamoylTrfase"/>
</dbReference>
<dbReference type="InterPro" id="IPR036901">
    <property type="entry name" value="Asp/Orn_carbamoylTrfase_sf"/>
</dbReference>
<dbReference type="InterPro" id="IPR006131">
    <property type="entry name" value="Asp_carbamoyltransf_Asp/Orn-bd"/>
</dbReference>
<dbReference type="InterPro" id="IPR002292">
    <property type="entry name" value="Orn/put_carbamltrans"/>
</dbReference>
<dbReference type="InterPro" id="IPR024903">
    <property type="entry name" value="PtcA"/>
</dbReference>
<dbReference type="NCBIfam" id="TIGR00658">
    <property type="entry name" value="orni_carb_tr"/>
    <property type="match status" value="1"/>
</dbReference>
<dbReference type="NCBIfam" id="NF001986">
    <property type="entry name" value="PRK00779.1"/>
    <property type="match status" value="1"/>
</dbReference>
<dbReference type="NCBIfam" id="TIGR04384">
    <property type="entry name" value="putr_carbamoyl"/>
    <property type="match status" value="1"/>
</dbReference>
<dbReference type="PANTHER" id="PTHR45753">
    <property type="entry name" value="ORNITHINE CARBAMOYLTRANSFERASE, MITOCHONDRIAL"/>
    <property type="match status" value="1"/>
</dbReference>
<dbReference type="PANTHER" id="PTHR45753:SF3">
    <property type="entry name" value="ORNITHINE TRANSCARBAMYLASE, MITOCHONDRIAL"/>
    <property type="match status" value="1"/>
</dbReference>
<dbReference type="Pfam" id="PF00185">
    <property type="entry name" value="OTCace"/>
    <property type="match status" value="1"/>
</dbReference>
<dbReference type="Pfam" id="PF02729">
    <property type="entry name" value="OTCace_N"/>
    <property type="match status" value="1"/>
</dbReference>
<dbReference type="PRINTS" id="PR00100">
    <property type="entry name" value="AOTCASE"/>
</dbReference>
<dbReference type="PRINTS" id="PR00102">
    <property type="entry name" value="OTCASE"/>
</dbReference>
<dbReference type="SUPFAM" id="SSF53671">
    <property type="entry name" value="Aspartate/ornithine carbamoyltransferase"/>
    <property type="match status" value="1"/>
</dbReference>
<proteinExistence type="inferred from homology"/>
<sequence length="341" mass="38469">MNKKRDFIDTKDFSKEEILFMIEIGRKMKESIKNGHYPQLLKHKTLGMIFEQSSTRTRVSFETAMTQLGGHAQYLAPGQIQLGGHESVGDTAKVLSRLVDILMARVERHQTVVELANTAAIPVINGMSDYNHPTQELGDAITMFEHLPKGKKIEDCKIVFVGDATQVCASTMFMATKLGMDFVQFGPKGFQLREEHLKIAEENCKVSGGSYLITEDVDIALKDADFIYTDVWYGLYEAELSEEERMKTFYPKYQVNKELISKAAPHVKFMHCLPATRGEEVTDEVLDAPYSVVIDEAENRLTAMRALLVYFMNPYVREAGFAVAEKYDAELELLLRNGAGL</sequence>